<reference key="1">
    <citation type="journal article" date="1993" name="Mol. Microbiol.">
        <title>The ompS gene of Vibrio cholerae encodes a growth-phase-dependent maltoporin.</title>
        <authorList>
            <person name="Lang H."/>
            <person name="Palva E.T."/>
        </authorList>
    </citation>
    <scope>NUCLEOTIDE SEQUENCE [GENOMIC DNA]</scope>
    <source>
        <strain>X28214</strain>
    </source>
</reference>
<reference key="2">
    <citation type="journal article" date="2000" name="Nature">
        <title>DNA sequence of both chromosomes of the cholera pathogen Vibrio cholerae.</title>
        <authorList>
            <person name="Heidelberg J.F."/>
            <person name="Eisen J.A."/>
            <person name="Nelson W.C."/>
            <person name="Clayton R.A."/>
            <person name="Gwinn M.L."/>
            <person name="Dodson R.J."/>
            <person name="Haft D.H."/>
            <person name="Hickey E.K."/>
            <person name="Peterson J.D."/>
            <person name="Umayam L.A."/>
            <person name="Gill S.R."/>
            <person name="Nelson K.E."/>
            <person name="Read T.D."/>
            <person name="Tettelin H."/>
            <person name="Richardson D.L."/>
            <person name="Ermolaeva M.D."/>
            <person name="Vamathevan J.J."/>
            <person name="Bass S."/>
            <person name="Qin H."/>
            <person name="Dragoi I."/>
            <person name="Sellers P."/>
            <person name="McDonald L.A."/>
            <person name="Utterback T.R."/>
            <person name="Fleischmann R.D."/>
            <person name="Nierman W.C."/>
            <person name="White O."/>
            <person name="Salzberg S.L."/>
            <person name="Smith H.O."/>
            <person name="Colwell R.R."/>
            <person name="Mekalanos J.J."/>
            <person name="Venter J.C."/>
            <person name="Fraser C.M."/>
        </authorList>
    </citation>
    <scope>NUCLEOTIDE SEQUENCE [LARGE SCALE GENOMIC DNA]</scope>
    <source>
        <strain>ATCC 39315 / El Tor Inaba N16961</strain>
    </source>
</reference>
<organism>
    <name type="scientific">Vibrio cholerae serotype O1 (strain ATCC 39315 / El Tor Inaba N16961)</name>
    <dbReference type="NCBI Taxonomy" id="243277"/>
    <lineage>
        <taxon>Bacteria</taxon>
        <taxon>Pseudomonadati</taxon>
        <taxon>Pseudomonadota</taxon>
        <taxon>Gammaproteobacteria</taxon>
        <taxon>Vibrionales</taxon>
        <taxon>Vibrionaceae</taxon>
        <taxon>Vibrio</taxon>
    </lineage>
</organism>
<keyword id="KW-0998">Cell outer membrane</keyword>
<keyword id="KW-0406">Ion transport</keyword>
<keyword id="KW-0472">Membrane</keyword>
<keyword id="KW-0626">Porin</keyword>
<keyword id="KW-1185">Reference proteome</keyword>
<keyword id="KW-0732">Signal</keyword>
<keyword id="KW-0762">Sugar transport</keyword>
<keyword id="KW-0812">Transmembrane</keyword>
<keyword id="KW-1134">Transmembrane beta strand</keyword>
<keyword id="KW-0813">Transport</keyword>
<feature type="signal peptide" evidence="1">
    <location>
        <begin position="1"/>
        <end position="22"/>
    </location>
</feature>
<feature type="chain" id="PRO_0000025183" description="Maltoporin" evidence="1">
    <location>
        <begin position="23"/>
        <end position="412"/>
    </location>
</feature>
<feature type="site" description="Greasy slide, important in sugar transport" evidence="1">
    <location>
        <position position="28"/>
    </location>
</feature>
<feature type="site" description="Greasy slide, important in sugar transport" evidence="1">
    <location>
        <position position="60"/>
    </location>
</feature>
<feature type="site" description="Greasy slide, important in sugar transport" evidence="1">
    <location>
        <position position="92"/>
    </location>
</feature>
<feature type="site" description="Important in sugar transport" evidence="1">
    <location>
        <position position="136"/>
    </location>
</feature>
<feature type="site" description="Greasy slide, important in sugar transport" evidence="1">
    <location>
        <position position="227"/>
    </location>
</feature>
<feature type="site" description="Greasy slide, important in sugar transport" evidence="1">
    <location>
        <position position="374"/>
    </location>
</feature>
<feature type="site" description="Greasy slide, important in sugar transport" evidence="1">
    <location>
        <position position="411"/>
    </location>
</feature>
<dbReference type="EMBL" id="X69379">
    <property type="protein sequence ID" value="CAA49176.1"/>
    <property type="molecule type" value="Genomic_DNA"/>
</dbReference>
<dbReference type="EMBL" id="AE003853">
    <property type="protein sequence ID" value="AAF96924.1"/>
    <property type="status" value="ALT_INIT"/>
    <property type="molecule type" value="Genomic_DNA"/>
</dbReference>
<dbReference type="PIR" id="C82388">
    <property type="entry name" value="C82388"/>
</dbReference>
<dbReference type="PIR" id="S39869">
    <property type="entry name" value="S39869"/>
</dbReference>
<dbReference type="RefSeq" id="NP_233412.1">
    <property type="nucleotide sequence ID" value="NC_002506.1"/>
</dbReference>
<dbReference type="RefSeq" id="WP_000757932.1">
    <property type="nucleotide sequence ID" value="NZ_LT906615.1"/>
</dbReference>
<dbReference type="SMR" id="Q56652"/>
<dbReference type="STRING" id="243277.VC_A1028"/>
<dbReference type="DNASU" id="2612207"/>
<dbReference type="EnsemblBacteria" id="AAF96924">
    <property type="protein sequence ID" value="AAF96924"/>
    <property type="gene ID" value="VC_A1028"/>
</dbReference>
<dbReference type="KEGG" id="vch:VC_A1028"/>
<dbReference type="PATRIC" id="fig|243277.26.peg.3633"/>
<dbReference type="eggNOG" id="COG4580">
    <property type="taxonomic scope" value="Bacteria"/>
</dbReference>
<dbReference type="HOGENOM" id="CLU_032473_4_1_6"/>
<dbReference type="Proteomes" id="UP000000584">
    <property type="component" value="Chromosome 2"/>
</dbReference>
<dbReference type="GO" id="GO:0009279">
    <property type="term" value="C:cell outer membrane"/>
    <property type="evidence" value="ECO:0000318"/>
    <property type="project" value="GO_Central"/>
</dbReference>
<dbReference type="GO" id="GO:0046930">
    <property type="term" value="C:pore complex"/>
    <property type="evidence" value="ECO:0007669"/>
    <property type="project" value="UniProtKB-KW"/>
</dbReference>
<dbReference type="GO" id="GO:0015144">
    <property type="term" value="F:carbohydrate transmembrane transporter activity"/>
    <property type="evidence" value="ECO:0000318"/>
    <property type="project" value="GO_Central"/>
</dbReference>
<dbReference type="GO" id="GO:0042958">
    <property type="term" value="F:maltodextrin transmembrane transporter activity"/>
    <property type="evidence" value="ECO:0007669"/>
    <property type="project" value="InterPro"/>
</dbReference>
<dbReference type="GO" id="GO:0015481">
    <property type="term" value="F:maltose transporting porin activity"/>
    <property type="evidence" value="ECO:0007669"/>
    <property type="project" value="InterPro"/>
</dbReference>
<dbReference type="GO" id="GO:0015288">
    <property type="term" value="F:porin activity"/>
    <property type="evidence" value="ECO:0000318"/>
    <property type="project" value="GO_Central"/>
</dbReference>
<dbReference type="GO" id="GO:0006811">
    <property type="term" value="P:monoatomic ion transport"/>
    <property type="evidence" value="ECO:0007669"/>
    <property type="project" value="UniProtKB-KW"/>
</dbReference>
<dbReference type="GO" id="GO:0015774">
    <property type="term" value="P:polysaccharide transport"/>
    <property type="evidence" value="ECO:0000318"/>
    <property type="project" value="GO_Central"/>
</dbReference>
<dbReference type="CDD" id="cd01346">
    <property type="entry name" value="Maltoporin-like"/>
    <property type="match status" value="1"/>
</dbReference>
<dbReference type="Gene3D" id="2.40.170.10">
    <property type="entry name" value="Porin, LamB type"/>
    <property type="match status" value="1"/>
</dbReference>
<dbReference type="HAMAP" id="MF_01301">
    <property type="entry name" value="LamB"/>
    <property type="match status" value="1"/>
</dbReference>
<dbReference type="InterPro" id="IPR050286">
    <property type="entry name" value="G_neg_Bact_CarbUptk_Porin"/>
</dbReference>
<dbReference type="InterPro" id="IPR023738">
    <property type="entry name" value="Maltoporin"/>
</dbReference>
<dbReference type="InterPro" id="IPR003192">
    <property type="entry name" value="Porin_LamB"/>
</dbReference>
<dbReference type="InterPro" id="IPR036998">
    <property type="entry name" value="Porin_LamB_sf"/>
</dbReference>
<dbReference type="NCBIfam" id="NF006860">
    <property type="entry name" value="PRK09360.1"/>
    <property type="match status" value="1"/>
</dbReference>
<dbReference type="PANTHER" id="PTHR38762">
    <property type="entry name" value="CRYPTIC OUTER MEMBRANE PORIN BGLH-RELATED"/>
    <property type="match status" value="1"/>
</dbReference>
<dbReference type="PANTHER" id="PTHR38762:SF1">
    <property type="entry name" value="CRYPTIC OUTER MEMBRANE PORIN BGLH-RELATED"/>
    <property type="match status" value="1"/>
</dbReference>
<dbReference type="Pfam" id="PF02264">
    <property type="entry name" value="LamB"/>
    <property type="match status" value="1"/>
</dbReference>
<dbReference type="SUPFAM" id="SSF56935">
    <property type="entry name" value="Porins"/>
    <property type="match status" value="1"/>
</dbReference>
<evidence type="ECO:0000255" key="1">
    <source>
        <dbReference type="HAMAP-Rule" id="MF_01301"/>
    </source>
</evidence>
<evidence type="ECO:0000305" key="2"/>
<proteinExistence type="inferred from homology"/>
<gene>
    <name evidence="1" type="primary">lamB</name>
    <name type="synonym">ompS</name>
    <name type="ordered locus">VC_A1028</name>
</gene>
<accession>Q56652</accession>
<accession>Q9KKS2</accession>
<name>LAMB_VIBCH</name>
<sequence>MKKVSVIAAAVAATLAAGSAFAVDFNGYFRAGTGISGNGNADQAVNKAGTGRLGNENDNYYEFGFAEELKTGEQTWKVESMIAQGNSGANGWEDGDFNVAQFNVQAKGLLASDQEAVMWAGKRYYQRKDIHITDFYFLNTSGTGGGIENLSVGNQKLSVALVQDGDNTNSSGYIFDARLANIGLWENASLELAMAYNFATEKDSKNEVADDGVLVSAILHQGLSNGFNQTVFQYGTAGYGAQAANFWGAGSYYARGTEAFNDASGFRLLNWGVINLGENWEMGHQLAYLAGSDIGGQFGGDGANKNTYTGKSFDIDQYSVVVRPMYKWNDTMRTVFEAGYNAGEKISNGGLATEDFGNAKFTVAQAWAMGDSFWARPELRVYGTYLLDTENDKAFGDDDTEFVVGIQVEAWW</sequence>
<protein>
    <recommendedName>
        <fullName evidence="1">Maltoporin</fullName>
    </recommendedName>
    <alternativeName>
        <fullName evidence="1">Maltose-inducible porin</fullName>
    </alternativeName>
    <alternativeName>
        <fullName>Outer membrane protein S</fullName>
    </alternativeName>
</protein>
<comment type="function">
    <text evidence="1">Involved in the transport of maltose and maltodextrins.</text>
</comment>
<comment type="catalytic activity">
    <reaction evidence="1">
        <text>beta-maltose(in) = beta-maltose(out)</text>
        <dbReference type="Rhea" id="RHEA:29731"/>
        <dbReference type="ChEBI" id="CHEBI:18147"/>
    </reaction>
</comment>
<comment type="subunit">
    <text evidence="1">Homotrimer formed of three 18-stranded antiparallel beta-barrels, containing three independent channels.</text>
</comment>
<comment type="subcellular location">
    <subcellularLocation>
        <location evidence="1">Cell outer membrane</location>
        <topology evidence="1">Multi-pass membrane protein</topology>
    </subcellularLocation>
</comment>
<comment type="induction">
    <text evidence="1">By maltose.</text>
</comment>
<comment type="similarity">
    <text evidence="1 2">Belongs to the porin LamB (TC 1.B.3) family.</text>
</comment>
<comment type="sequence caution" evidence="2">
    <conflict type="erroneous initiation">
        <sequence resource="EMBL-CDS" id="AAF96924"/>
    </conflict>
</comment>